<evidence type="ECO:0000255" key="1">
    <source>
        <dbReference type="HAMAP-Rule" id="MF_00083"/>
    </source>
</evidence>
<protein>
    <recommendedName>
        <fullName evidence="1">Peptidyl-tRNA hydrolase 1</fullName>
        <shortName evidence="1">Pth 1</shortName>
        <ecNumber evidence="1">3.1.1.29</ecNumber>
    </recommendedName>
</protein>
<proteinExistence type="inferred from homology"/>
<comment type="function">
    <text evidence="1">Hydrolyzes ribosome-free peptidyl-tRNAs (with 1 or more amino acids incorporated), which drop off the ribosome during protein synthesis, or as a result of ribosome stalling.</text>
</comment>
<comment type="function">
    <text evidence="1">Catalyzes the release of premature peptidyl moieties from peptidyl-tRNA molecules trapped in stalled 50S ribosomal subunits, and thus maintains levels of free tRNAs and 50S ribosomes.</text>
</comment>
<comment type="catalytic activity">
    <reaction evidence="1">
        <text>an N-acyl-L-alpha-aminoacyl-tRNA + H2O = an N-acyl-L-amino acid + a tRNA + H(+)</text>
        <dbReference type="Rhea" id="RHEA:54448"/>
        <dbReference type="Rhea" id="RHEA-COMP:10123"/>
        <dbReference type="Rhea" id="RHEA-COMP:13883"/>
        <dbReference type="ChEBI" id="CHEBI:15377"/>
        <dbReference type="ChEBI" id="CHEBI:15378"/>
        <dbReference type="ChEBI" id="CHEBI:59874"/>
        <dbReference type="ChEBI" id="CHEBI:78442"/>
        <dbReference type="ChEBI" id="CHEBI:138191"/>
        <dbReference type="EC" id="3.1.1.29"/>
    </reaction>
</comment>
<comment type="subunit">
    <text evidence="1">Monomer.</text>
</comment>
<comment type="subcellular location">
    <subcellularLocation>
        <location evidence="1">Cytoplasm</location>
    </subcellularLocation>
</comment>
<comment type="similarity">
    <text evidence="1">Belongs to the PTH family.</text>
</comment>
<feature type="chain" id="PRO_0000187727" description="Peptidyl-tRNA hydrolase 1">
    <location>
        <begin position="1"/>
        <end position="177"/>
    </location>
</feature>
<feature type="active site" description="Proton acceptor" evidence="1">
    <location>
        <position position="23"/>
    </location>
</feature>
<feature type="binding site" evidence="1">
    <location>
        <position position="18"/>
    </location>
    <ligand>
        <name>tRNA</name>
        <dbReference type="ChEBI" id="CHEBI:17843"/>
    </ligand>
</feature>
<feature type="binding site" evidence="1">
    <location>
        <position position="65"/>
    </location>
    <ligand>
        <name>tRNA</name>
        <dbReference type="ChEBI" id="CHEBI:17843"/>
    </ligand>
</feature>
<feature type="binding site" evidence="1">
    <location>
        <position position="67"/>
    </location>
    <ligand>
        <name>tRNA</name>
        <dbReference type="ChEBI" id="CHEBI:17843"/>
    </ligand>
</feature>
<feature type="binding site" evidence="1">
    <location>
        <position position="113"/>
    </location>
    <ligand>
        <name>tRNA</name>
        <dbReference type="ChEBI" id="CHEBI:17843"/>
    </ligand>
</feature>
<feature type="site" description="Discriminates between blocked and unblocked aminoacyl-tRNA" evidence="1">
    <location>
        <position position="13"/>
    </location>
</feature>
<feature type="site" description="Stabilizes the basic form of H active site to accept a proton" evidence="1">
    <location>
        <position position="92"/>
    </location>
</feature>
<accession>Q8NRV3</accession>
<name>PTH1_CORGL</name>
<gene>
    <name evidence="1" type="primary">pth1</name>
    <name type="ordered locus">Cgl0938</name>
    <name type="ordered locus">cg1071</name>
</gene>
<dbReference type="EC" id="3.1.1.29" evidence="1"/>
<dbReference type="EMBL" id="BA000036">
    <property type="protein sequence ID" value="BAB98331.1"/>
    <property type="molecule type" value="Genomic_DNA"/>
</dbReference>
<dbReference type="EMBL" id="BX927150">
    <property type="protein sequence ID" value="CAF19645.1"/>
    <property type="molecule type" value="Genomic_DNA"/>
</dbReference>
<dbReference type="RefSeq" id="NP_600166.1">
    <property type="nucleotide sequence ID" value="NC_003450.3"/>
</dbReference>
<dbReference type="SMR" id="Q8NRV3"/>
<dbReference type="STRING" id="196627.cg1071"/>
<dbReference type="KEGG" id="cgb:cg1071"/>
<dbReference type="KEGG" id="cgl:Cgl0938"/>
<dbReference type="PATRIC" id="fig|196627.13.peg.925"/>
<dbReference type="eggNOG" id="COG0193">
    <property type="taxonomic scope" value="Bacteria"/>
</dbReference>
<dbReference type="HOGENOM" id="CLU_062456_2_2_11"/>
<dbReference type="OrthoDB" id="9800507at2"/>
<dbReference type="BioCyc" id="CORYNE:G18NG-10508-MONOMER"/>
<dbReference type="Proteomes" id="UP000000582">
    <property type="component" value="Chromosome"/>
</dbReference>
<dbReference type="Proteomes" id="UP000001009">
    <property type="component" value="Chromosome"/>
</dbReference>
<dbReference type="GO" id="GO:0005737">
    <property type="term" value="C:cytoplasm"/>
    <property type="evidence" value="ECO:0007669"/>
    <property type="project" value="UniProtKB-SubCell"/>
</dbReference>
<dbReference type="GO" id="GO:0004045">
    <property type="term" value="F:peptidyl-tRNA hydrolase activity"/>
    <property type="evidence" value="ECO:0007669"/>
    <property type="project" value="UniProtKB-UniRule"/>
</dbReference>
<dbReference type="GO" id="GO:0000049">
    <property type="term" value="F:tRNA binding"/>
    <property type="evidence" value="ECO:0007669"/>
    <property type="project" value="UniProtKB-UniRule"/>
</dbReference>
<dbReference type="GO" id="GO:0006515">
    <property type="term" value="P:protein quality control for misfolded or incompletely synthesized proteins"/>
    <property type="evidence" value="ECO:0007669"/>
    <property type="project" value="UniProtKB-UniRule"/>
</dbReference>
<dbReference type="GO" id="GO:0072344">
    <property type="term" value="P:rescue of stalled ribosome"/>
    <property type="evidence" value="ECO:0007669"/>
    <property type="project" value="UniProtKB-UniRule"/>
</dbReference>
<dbReference type="CDD" id="cd00462">
    <property type="entry name" value="PTH"/>
    <property type="match status" value="1"/>
</dbReference>
<dbReference type="Gene3D" id="3.40.50.1470">
    <property type="entry name" value="Peptidyl-tRNA hydrolase"/>
    <property type="match status" value="1"/>
</dbReference>
<dbReference type="HAMAP" id="MF_00083">
    <property type="entry name" value="Pept_tRNA_hydro_bact"/>
    <property type="match status" value="1"/>
</dbReference>
<dbReference type="InterPro" id="IPR001328">
    <property type="entry name" value="Pept_tRNA_hydro"/>
</dbReference>
<dbReference type="InterPro" id="IPR018171">
    <property type="entry name" value="Pept_tRNA_hydro_CS"/>
</dbReference>
<dbReference type="InterPro" id="IPR036416">
    <property type="entry name" value="Pept_tRNA_hydro_sf"/>
</dbReference>
<dbReference type="NCBIfam" id="TIGR00447">
    <property type="entry name" value="pth"/>
    <property type="match status" value="1"/>
</dbReference>
<dbReference type="PANTHER" id="PTHR17224">
    <property type="entry name" value="PEPTIDYL-TRNA HYDROLASE"/>
    <property type="match status" value="1"/>
</dbReference>
<dbReference type="PANTHER" id="PTHR17224:SF1">
    <property type="entry name" value="PEPTIDYL-TRNA HYDROLASE"/>
    <property type="match status" value="1"/>
</dbReference>
<dbReference type="Pfam" id="PF01195">
    <property type="entry name" value="Pept_tRNA_hydro"/>
    <property type="match status" value="1"/>
</dbReference>
<dbReference type="SUPFAM" id="SSF53178">
    <property type="entry name" value="Peptidyl-tRNA hydrolase-like"/>
    <property type="match status" value="1"/>
</dbReference>
<dbReference type="PROSITE" id="PS01195">
    <property type="entry name" value="PEPT_TRNA_HYDROL_1"/>
    <property type="match status" value="1"/>
</dbReference>
<dbReference type="PROSITE" id="PS01196">
    <property type="entry name" value="PEPT_TRNA_HYDROL_2"/>
    <property type="match status" value="1"/>
</dbReference>
<organism>
    <name type="scientific">Corynebacterium glutamicum (strain ATCC 13032 / DSM 20300 / JCM 1318 / BCRC 11384 / CCUG 27702 / LMG 3730 / NBRC 12168 / NCIMB 10025 / NRRL B-2784 / 534)</name>
    <dbReference type="NCBI Taxonomy" id="196627"/>
    <lineage>
        <taxon>Bacteria</taxon>
        <taxon>Bacillati</taxon>
        <taxon>Actinomycetota</taxon>
        <taxon>Actinomycetes</taxon>
        <taxon>Mycobacteriales</taxon>
        <taxon>Corynebacteriaceae</taxon>
        <taxon>Corynebacterium</taxon>
    </lineage>
</organism>
<reference key="1">
    <citation type="journal article" date="2003" name="Appl. Microbiol. Biotechnol.">
        <title>The Corynebacterium glutamicum genome: features and impacts on biotechnological processes.</title>
        <authorList>
            <person name="Ikeda M."/>
            <person name="Nakagawa S."/>
        </authorList>
    </citation>
    <scope>NUCLEOTIDE SEQUENCE [LARGE SCALE GENOMIC DNA]</scope>
    <source>
        <strain>ATCC 13032 / DSM 20300 / JCM 1318 / BCRC 11384 / CCUG 27702 / LMG 3730 / NBRC 12168 / NCIMB 10025 / NRRL B-2784 / 534</strain>
    </source>
</reference>
<reference key="2">
    <citation type="journal article" date="2003" name="J. Biotechnol.">
        <title>The complete Corynebacterium glutamicum ATCC 13032 genome sequence and its impact on the production of L-aspartate-derived amino acids and vitamins.</title>
        <authorList>
            <person name="Kalinowski J."/>
            <person name="Bathe B."/>
            <person name="Bartels D."/>
            <person name="Bischoff N."/>
            <person name="Bott M."/>
            <person name="Burkovski A."/>
            <person name="Dusch N."/>
            <person name="Eggeling L."/>
            <person name="Eikmanns B.J."/>
            <person name="Gaigalat L."/>
            <person name="Goesmann A."/>
            <person name="Hartmann M."/>
            <person name="Huthmacher K."/>
            <person name="Kraemer R."/>
            <person name="Linke B."/>
            <person name="McHardy A.C."/>
            <person name="Meyer F."/>
            <person name="Moeckel B."/>
            <person name="Pfefferle W."/>
            <person name="Puehler A."/>
            <person name="Rey D.A."/>
            <person name="Rueckert C."/>
            <person name="Rupp O."/>
            <person name="Sahm H."/>
            <person name="Wendisch V.F."/>
            <person name="Wiegraebe I."/>
            <person name="Tauch A."/>
        </authorList>
    </citation>
    <scope>NUCLEOTIDE SEQUENCE [LARGE SCALE GENOMIC DNA]</scope>
    <source>
        <strain>ATCC 13032 / DSM 20300 / JCM 1318 / BCRC 11384 / CCUG 27702 / LMG 3730 / NBRC 12168 / NCIMB 10025 / NRRL B-2784 / 534</strain>
    </source>
</reference>
<keyword id="KW-0963">Cytoplasm</keyword>
<keyword id="KW-0378">Hydrolase</keyword>
<keyword id="KW-1185">Reference proteome</keyword>
<keyword id="KW-0694">RNA-binding</keyword>
<keyword id="KW-0820">tRNA-binding</keyword>
<sequence>MNNSPLLVVGLGNPGPKYVGTRHNIGFEVAEELVSRSFGSFSVHKRSNTDIAQLPGLIVAKPRSFMNLSGTPIRALCDFFKISPANVIVVHDELELDFGSVKLRQGGGDHGHNGLKSTSKSLGTKDYWKLSMGIGRPPGRMDPASFVLKPFGKQELADIPIMAADAADLVEKHLQQG</sequence>